<name>ODPB_GEOSE</name>
<sequence length="325" mass="35460">MAQMTMVQAITDALRIELKNDPNVLIFGEDVGVNGGVFRATEGLQAEFGEDRVFDTPLAESGIGGLAIGLALQGFRPVPEIQFFGFVYEVMDSICGQMARIRYRTGGRYHMPITIRSPFGGGVHTPELHSDSLEGLVAQQPGLKVVIPSTPYDAKGLLISAIRDNDPVIFLEHLKLYRSFRQEVPEGEYTIPIGKADIKREGKDITIIAYGAMVHESLKAAAELEKEGISAEVVDLRTVQPLDIETIIGSVEKTGRAIVVQEAQRQAGIAANVVAEINERAILSLEAPVLRVAAPDTVYPFAQAESVWLPNFKDVIETAKKVMNF</sequence>
<reference key="1">
    <citation type="journal article" date="1990" name="Eur. J. Biochem.">
        <title>Cloning and sequence analysis of the genes encoding the alpha and beta subunits of the E1 component of the pyruvate dehydrogenase multienzyme complex of Bacillus stearothermophilus.</title>
        <authorList>
            <person name="Hawkins C.F."/>
            <person name="Borges A."/>
            <person name="Perham R.N."/>
        </authorList>
    </citation>
    <scope>NUCLEOTIDE SEQUENCE [GENOMIC DNA]</scope>
    <scope>PARTIAL PROTEIN SEQUENCE</scope>
    <source>
        <strain>ATCC 29609 / DSM 2027 / NCA 1503 / NCIMB 8924</strain>
    </source>
</reference>
<reference key="2">
    <citation type="journal article" date="1990" name="Eur. J. Biochem.">
        <title>Cloning and sequence analysis of the genes encoding the dihydrolipoamide acetyltransferase and dihydrolipoamide dehydrogenase components of the pyruvate dehydrogenase multienzyme complex of Bacillus stearothermophilus.</title>
        <authorList>
            <person name="Borges A."/>
            <person name="Hawkins C.F."/>
            <person name="Packman L.C."/>
            <person name="Perham R.N."/>
        </authorList>
    </citation>
    <scope>NUCLEOTIDE SEQUENCE [GENOMIC DNA]</scope>
</reference>
<gene>
    <name type="primary">pdhB</name>
</gene>
<comment type="function">
    <text>The pyruvate dehydrogenase complex catalyzes the overall conversion of pyruvate to acetyl-CoA and CO(2). It contains multiple copies of three enzymatic components: pyruvate dehydrogenase (E1), dihydrolipoamide acetyltransferase (E2) and lipoamide dehydrogenase (E3).</text>
</comment>
<comment type="catalytic activity">
    <reaction>
        <text>N(6)-[(R)-lipoyl]-L-lysyl-[protein] + pyruvate + H(+) = N(6)-[(R)-S(8)-acetyldihydrolipoyl]-L-lysyl-[protein] + CO2</text>
        <dbReference type="Rhea" id="RHEA:19189"/>
        <dbReference type="Rhea" id="RHEA-COMP:10474"/>
        <dbReference type="Rhea" id="RHEA-COMP:10478"/>
        <dbReference type="ChEBI" id="CHEBI:15361"/>
        <dbReference type="ChEBI" id="CHEBI:15378"/>
        <dbReference type="ChEBI" id="CHEBI:16526"/>
        <dbReference type="ChEBI" id="CHEBI:83099"/>
        <dbReference type="ChEBI" id="CHEBI:83111"/>
        <dbReference type="EC" id="1.2.4.1"/>
    </reaction>
</comment>
<comment type="cofactor">
    <cofactor>
        <name>thiamine diphosphate</name>
        <dbReference type="ChEBI" id="CHEBI:58937"/>
    </cofactor>
</comment>
<comment type="subunit">
    <text>Heterodimer of an alpha and a beta chain.</text>
</comment>
<comment type="interaction">
    <interactant intactId="EBI-1040700">
        <id>P21874</id>
    </interactant>
    <interactant intactId="EBI-1040686">
        <id>P21873</id>
        <label>pdhA</label>
    </interactant>
    <organismsDiffer>false</organismsDiffer>
    <experiments>3</experiments>
</comment>
<keyword id="KW-0002">3D-structure</keyword>
<keyword id="KW-0903">Direct protein sequencing</keyword>
<keyword id="KW-0560">Oxidoreductase</keyword>
<keyword id="KW-0670">Pyruvate</keyword>
<keyword id="KW-0786">Thiamine pyrophosphate</keyword>
<evidence type="ECO:0000250" key="1"/>
<evidence type="ECO:0007829" key="2">
    <source>
        <dbReference type="PDB" id="1W85"/>
    </source>
</evidence>
<evidence type="ECO:0007829" key="3">
    <source>
        <dbReference type="PDB" id="1W88"/>
    </source>
</evidence>
<evidence type="ECO:0007829" key="4">
    <source>
        <dbReference type="PDB" id="3DUF"/>
    </source>
</evidence>
<feature type="initiator methionine" description="Removed">
    <location>
        <position position="1"/>
    </location>
</feature>
<feature type="chain" id="PRO_0000162221" description="Pyruvate dehydrogenase E1 component subunit beta">
    <location>
        <begin position="2"/>
        <end position="325"/>
    </location>
</feature>
<feature type="binding site" evidence="1">
    <location>
        <position position="60"/>
    </location>
    <ligand>
        <name>thiamine diphosphate</name>
        <dbReference type="ChEBI" id="CHEBI:58937"/>
    </ligand>
</feature>
<feature type="strand" evidence="3">
    <location>
        <begin position="3"/>
        <end position="5"/>
    </location>
</feature>
<feature type="helix" evidence="2">
    <location>
        <begin position="6"/>
        <end position="20"/>
    </location>
</feature>
<feature type="strand" evidence="2">
    <location>
        <begin position="24"/>
        <end position="28"/>
    </location>
</feature>
<feature type="strand" evidence="4">
    <location>
        <begin position="32"/>
        <end position="34"/>
    </location>
</feature>
<feature type="turn" evidence="2">
    <location>
        <begin position="40"/>
        <end position="43"/>
    </location>
</feature>
<feature type="helix" evidence="2">
    <location>
        <begin position="44"/>
        <end position="48"/>
    </location>
</feature>
<feature type="turn" evidence="2">
    <location>
        <begin position="50"/>
        <end position="52"/>
    </location>
</feature>
<feature type="strand" evidence="2">
    <location>
        <begin position="53"/>
        <end position="55"/>
    </location>
</feature>
<feature type="helix" evidence="2">
    <location>
        <begin position="60"/>
        <end position="72"/>
    </location>
</feature>
<feature type="strand" evidence="2">
    <location>
        <begin position="76"/>
        <end position="80"/>
    </location>
</feature>
<feature type="helix" evidence="2">
    <location>
        <begin position="84"/>
        <end position="89"/>
    </location>
</feature>
<feature type="helix" evidence="2">
    <location>
        <begin position="91"/>
        <end position="95"/>
    </location>
</feature>
<feature type="helix" evidence="2">
    <location>
        <begin position="98"/>
        <end position="100"/>
    </location>
</feature>
<feature type="helix" evidence="2">
    <location>
        <begin position="101"/>
        <end position="104"/>
    </location>
</feature>
<feature type="turn" evidence="2">
    <location>
        <begin position="105"/>
        <end position="107"/>
    </location>
</feature>
<feature type="strand" evidence="2">
    <location>
        <begin position="114"/>
        <end position="119"/>
    </location>
</feature>
<feature type="strand" evidence="2">
    <location>
        <begin position="121"/>
        <end position="123"/>
    </location>
</feature>
<feature type="turn" evidence="3">
    <location>
        <begin position="127"/>
        <end position="129"/>
    </location>
</feature>
<feature type="helix" evidence="2">
    <location>
        <begin position="134"/>
        <end position="137"/>
    </location>
</feature>
<feature type="strand" evidence="2">
    <location>
        <begin position="144"/>
        <end position="146"/>
    </location>
</feature>
<feature type="helix" evidence="2">
    <location>
        <begin position="151"/>
        <end position="163"/>
    </location>
</feature>
<feature type="strand" evidence="2">
    <location>
        <begin position="164"/>
        <end position="166"/>
    </location>
</feature>
<feature type="strand" evidence="2">
    <location>
        <begin position="168"/>
        <end position="173"/>
    </location>
</feature>
<feature type="turn" evidence="2">
    <location>
        <begin position="174"/>
        <end position="176"/>
    </location>
</feature>
<feature type="strand" evidence="2">
    <location>
        <begin position="177"/>
        <end position="179"/>
    </location>
</feature>
<feature type="strand" evidence="3">
    <location>
        <begin position="181"/>
        <end position="183"/>
    </location>
</feature>
<feature type="strand" evidence="2">
    <location>
        <begin position="197"/>
        <end position="200"/>
    </location>
</feature>
<feature type="strand" evidence="2">
    <location>
        <begin position="203"/>
        <end position="209"/>
    </location>
</feature>
<feature type="helix" evidence="2">
    <location>
        <begin position="213"/>
        <end position="226"/>
    </location>
</feature>
<feature type="strand" evidence="2">
    <location>
        <begin position="231"/>
        <end position="235"/>
    </location>
</feature>
<feature type="strand" evidence="2">
    <location>
        <begin position="237"/>
        <end position="241"/>
    </location>
</feature>
<feature type="helix" evidence="2">
    <location>
        <begin position="244"/>
        <end position="254"/>
    </location>
</feature>
<feature type="strand" evidence="2">
    <location>
        <begin position="257"/>
        <end position="264"/>
    </location>
</feature>
<feature type="strand" evidence="2">
    <location>
        <begin position="267"/>
        <end position="269"/>
    </location>
</feature>
<feature type="helix" evidence="2">
    <location>
        <begin position="270"/>
        <end position="281"/>
    </location>
</feature>
<feature type="helix" evidence="2">
    <location>
        <begin position="282"/>
        <end position="284"/>
    </location>
</feature>
<feature type="strand" evidence="2">
    <location>
        <begin position="290"/>
        <end position="294"/>
    </location>
</feature>
<feature type="strand" evidence="2">
    <location>
        <begin position="296"/>
        <end position="299"/>
    </location>
</feature>
<feature type="helix" evidence="2">
    <location>
        <begin position="302"/>
        <end position="304"/>
    </location>
</feature>
<feature type="helix" evidence="2">
    <location>
        <begin position="305"/>
        <end position="308"/>
    </location>
</feature>
<feature type="helix" evidence="2">
    <location>
        <begin position="312"/>
        <end position="323"/>
    </location>
</feature>
<dbReference type="EC" id="1.2.4.1"/>
<dbReference type="EMBL" id="X53560">
    <property type="protein sequence ID" value="CAA37629.1"/>
    <property type="molecule type" value="Genomic_DNA"/>
</dbReference>
<dbReference type="PIR" id="S14230">
    <property type="entry name" value="S14230"/>
</dbReference>
<dbReference type="RefSeq" id="WP_033016213.1">
    <property type="nucleotide sequence ID" value="NZ_RCTK01000001.1"/>
</dbReference>
<dbReference type="PDB" id="1W85">
    <property type="method" value="X-ray"/>
    <property type="resolution" value="2.00 A"/>
    <property type="chains" value="B/D/F/H=2-325"/>
</dbReference>
<dbReference type="PDB" id="1W88">
    <property type="method" value="X-ray"/>
    <property type="resolution" value="2.30 A"/>
    <property type="chains" value="B/D/F/H=2-325"/>
</dbReference>
<dbReference type="PDB" id="3DUF">
    <property type="method" value="X-ray"/>
    <property type="resolution" value="2.50 A"/>
    <property type="chains" value="B/D/F/H=1-325"/>
</dbReference>
<dbReference type="PDB" id="3DV0">
    <property type="method" value="X-ray"/>
    <property type="resolution" value="2.50 A"/>
    <property type="chains" value="B/D/F/H=1-325"/>
</dbReference>
<dbReference type="PDB" id="3DVA">
    <property type="method" value="X-ray"/>
    <property type="resolution" value="2.35 A"/>
    <property type="chains" value="B/D/F/H=1-325"/>
</dbReference>
<dbReference type="PDBsum" id="1W85"/>
<dbReference type="PDBsum" id="1W88"/>
<dbReference type="PDBsum" id="3DUF"/>
<dbReference type="PDBsum" id="3DV0"/>
<dbReference type="PDBsum" id="3DVA"/>
<dbReference type="SMR" id="P21874"/>
<dbReference type="DIP" id="DIP-29597N"/>
<dbReference type="IntAct" id="P21874">
    <property type="interactions" value="2"/>
</dbReference>
<dbReference type="GeneID" id="89611724"/>
<dbReference type="OrthoDB" id="9771835at2"/>
<dbReference type="BRENDA" id="1.2.4.1">
    <property type="organism ID" value="623"/>
</dbReference>
<dbReference type="SABIO-RK" id="P21874"/>
<dbReference type="EvolutionaryTrace" id="P21874"/>
<dbReference type="GO" id="GO:0004739">
    <property type="term" value="F:pyruvate dehydrogenase (acetyl-transferring) activity"/>
    <property type="evidence" value="ECO:0007669"/>
    <property type="project" value="UniProtKB-EC"/>
</dbReference>
<dbReference type="CDD" id="cd07036">
    <property type="entry name" value="TPP_PYR_E1-PDHc-beta_like"/>
    <property type="match status" value="1"/>
</dbReference>
<dbReference type="FunFam" id="3.40.50.920:FF:000001">
    <property type="entry name" value="Pyruvate dehydrogenase E1 beta subunit"/>
    <property type="match status" value="1"/>
</dbReference>
<dbReference type="FunFam" id="3.40.50.970:FF:000001">
    <property type="entry name" value="Pyruvate dehydrogenase E1 beta subunit"/>
    <property type="match status" value="1"/>
</dbReference>
<dbReference type="Gene3D" id="3.40.50.920">
    <property type="match status" value="1"/>
</dbReference>
<dbReference type="Gene3D" id="3.40.50.970">
    <property type="match status" value="1"/>
</dbReference>
<dbReference type="InterPro" id="IPR029061">
    <property type="entry name" value="THDP-binding"/>
</dbReference>
<dbReference type="InterPro" id="IPR009014">
    <property type="entry name" value="Transketo_C/PFOR_II"/>
</dbReference>
<dbReference type="InterPro" id="IPR005475">
    <property type="entry name" value="Transketolase-like_Pyr-bd"/>
</dbReference>
<dbReference type="InterPro" id="IPR033248">
    <property type="entry name" value="Transketolase_C"/>
</dbReference>
<dbReference type="PANTHER" id="PTHR43257">
    <property type="entry name" value="PYRUVATE DEHYDROGENASE E1 COMPONENT BETA SUBUNIT"/>
    <property type="match status" value="1"/>
</dbReference>
<dbReference type="PANTHER" id="PTHR43257:SF2">
    <property type="entry name" value="PYRUVATE DEHYDROGENASE E1 COMPONENT SUBUNIT BETA"/>
    <property type="match status" value="1"/>
</dbReference>
<dbReference type="Pfam" id="PF02779">
    <property type="entry name" value="Transket_pyr"/>
    <property type="match status" value="1"/>
</dbReference>
<dbReference type="Pfam" id="PF02780">
    <property type="entry name" value="Transketolase_C"/>
    <property type="match status" value="1"/>
</dbReference>
<dbReference type="SMART" id="SM00861">
    <property type="entry name" value="Transket_pyr"/>
    <property type="match status" value="1"/>
</dbReference>
<dbReference type="SUPFAM" id="SSF52518">
    <property type="entry name" value="Thiamin diphosphate-binding fold (THDP-binding)"/>
    <property type="match status" value="1"/>
</dbReference>
<dbReference type="SUPFAM" id="SSF52922">
    <property type="entry name" value="TK C-terminal domain-like"/>
    <property type="match status" value="1"/>
</dbReference>
<accession>P21874</accession>
<organism>
    <name type="scientific">Geobacillus stearothermophilus</name>
    <name type="common">Bacillus stearothermophilus</name>
    <dbReference type="NCBI Taxonomy" id="1422"/>
    <lineage>
        <taxon>Bacteria</taxon>
        <taxon>Bacillati</taxon>
        <taxon>Bacillota</taxon>
        <taxon>Bacilli</taxon>
        <taxon>Bacillales</taxon>
        <taxon>Anoxybacillaceae</taxon>
        <taxon>Geobacillus</taxon>
    </lineage>
</organism>
<protein>
    <recommendedName>
        <fullName>Pyruvate dehydrogenase E1 component subunit beta</fullName>
        <ecNumber>1.2.4.1</ecNumber>
    </recommendedName>
</protein>
<proteinExistence type="evidence at protein level"/>